<name>PHYA_PENOX</name>
<keyword id="KW-1015">Disulfide bond</keyword>
<keyword id="KW-0325">Glycoprotein</keyword>
<keyword id="KW-0378">Hydrolase</keyword>
<keyword id="KW-0964">Secreted</keyword>
<accession>Q6YNE9</accession>
<gene>
    <name evidence="6" type="primary">phyA</name>
</gene>
<sequence length="461" mass="50501">MFDIALRSGPARGGVSHRVRTCDTVDGGYQCFPRLSHRWGQYSPYFSLANTGLPSEVPEKCELTFVQVLSRHGARYPTASKSKKYKSLIQAIQANATAYNGQSVFLRAYNYTLGSEDLTSFGEHQMINSGIKFYQRYAALTRDHVPFIRSSDSSRVVASGQLFIQGYEQSKAQDCDADHSQDHAAINVLISEAPGANNTLNHNTCAAFEADKLGDQVSAKYTALIAPPMAQRLHHDLPGVTLTDDQVIYLMDMCAYDTVATTPGATSLSPFCALFTDTEWSQYNYLQSLGKYYGYGAGNPLGPTQGVGFINELIARMTHSPVHDHTTSNRTLDAPGADSFPTNRTLYADFTHDNGMIPIFFALGLYNGSDPLPHDRIVPATQADGYSAAWAVPFAARAYIEMMQCGRETEPLVRVLINDRVAPLKGCNVDQLGRCKRSDFVNALSFAQDGGDWAKCGVSSK</sequence>
<protein>
    <recommendedName>
        <fullName evidence="6">Phytase A</fullName>
        <ecNumber evidence="2">3.1.3.-</ecNumber>
        <ecNumber evidence="4 5">3.1.3.8</ecNumber>
    </recommendedName>
    <alternativeName>
        <fullName evidence="2">Histidine acid phosphatase phyA</fullName>
        <shortName evidence="2">HAP</shortName>
    </alternativeName>
    <alternativeName>
        <fullName evidence="2">Myo-inositol hexakisphosphate phosphohydrolase A</fullName>
    </alternativeName>
    <alternativeName>
        <fullName evidence="2">Myo-inositol-hexaphosphate 3-phosphohydrolase A</fullName>
    </alternativeName>
</protein>
<dbReference type="EC" id="3.1.3.-" evidence="2"/>
<dbReference type="EC" id="3.1.3.8" evidence="4 5"/>
<dbReference type="EMBL" id="AY071824">
    <property type="protein sequence ID" value="AAL55406.1"/>
    <property type="molecule type" value="Genomic_DNA"/>
</dbReference>
<dbReference type="SMR" id="Q6YNE9"/>
<dbReference type="BRENDA" id="3.1.3.26">
    <property type="organism ID" value="4629"/>
</dbReference>
<dbReference type="BRENDA" id="3.1.3.8">
    <property type="organism ID" value="4629"/>
</dbReference>
<dbReference type="GO" id="GO:0005576">
    <property type="term" value="C:extracellular region"/>
    <property type="evidence" value="ECO:0007669"/>
    <property type="project" value="UniProtKB-SubCell"/>
</dbReference>
<dbReference type="GO" id="GO:0016158">
    <property type="term" value="F:3-phytase activity"/>
    <property type="evidence" value="ECO:0007669"/>
    <property type="project" value="UniProtKB-EC"/>
</dbReference>
<dbReference type="GO" id="GO:0003993">
    <property type="term" value="F:acid phosphatase activity"/>
    <property type="evidence" value="ECO:0007669"/>
    <property type="project" value="TreeGrafter"/>
</dbReference>
<dbReference type="CDD" id="cd07061">
    <property type="entry name" value="HP_HAP_like"/>
    <property type="match status" value="1"/>
</dbReference>
<dbReference type="FunFam" id="3.40.50.1240:FF:000027">
    <property type="entry name" value="3-phytase A"/>
    <property type="match status" value="1"/>
</dbReference>
<dbReference type="Gene3D" id="3.40.50.1240">
    <property type="entry name" value="Phosphoglycerate mutase-like"/>
    <property type="match status" value="1"/>
</dbReference>
<dbReference type="InterPro" id="IPR033379">
    <property type="entry name" value="Acid_Pase_AS"/>
</dbReference>
<dbReference type="InterPro" id="IPR000560">
    <property type="entry name" value="His_Pase_clade-2"/>
</dbReference>
<dbReference type="InterPro" id="IPR029033">
    <property type="entry name" value="His_PPase_superfam"/>
</dbReference>
<dbReference type="InterPro" id="IPR016274">
    <property type="entry name" value="Histidine_acid_Pase_euk"/>
</dbReference>
<dbReference type="PANTHER" id="PTHR20963:SF24">
    <property type="entry name" value="3-PHYTASE B"/>
    <property type="match status" value="1"/>
</dbReference>
<dbReference type="PANTHER" id="PTHR20963">
    <property type="entry name" value="MULTIPLE INOSITOL POLYPHOSPHATE PHOSPHATASE-RELATED"/>
    <property type="match status" value="1"/>
</dbReference>
<dbReference type="Pfam" id="PF00328">
    <property type="entry name" value="His_Phos_2"/>
    <property type="match status" value="1"/>
</dbReference>
<dbReference type="PIRSF" id="PIRSF000894">
    <property type="entry name" value="Acid_phosphatase"/>
    <property type="match status" value="1"/>
</dbReference>
<dbReference type="SUPFAM" id="SSF53254">
    <property type="entry name" value="Phosphoglycerate mutase-like"/>
    <property type="match status" value="1"/>
</dbReference>
<dbReference type="PROSITE" id="PS00616">
    <property type="entry name" value="HIS_ACID_PHOSPHAT_1"/>
    <property type="match status" value="1"/>
</dbReference>
<dbReference type="PROSITE" id="PS00778">
    <property type="entry name" value="HIS_ACID_PHOSPHAT_2"/>
    <property type="match status" value="1"/>
</dbReference>
<proteinExistence type="evidence at protein level"/>
<organism>
    <name type="scientific">Penicillium oxalicum</name>
    <dbReference type="NCBI Taxonomy" id="69781"/>
    <lineage>
        <taxon>Eukaryota</taxon>
        <taxon>Fungi</taxon>
        <taxon>Dikarya</taxon>
        <taxon>Ascomycota</taxon>
        <taxon>Pezizomycotina</taxon>
        <taxon>Eurotiomycetes</taxon>
        <taxon>Eurotiomycetidae</taxon>
        <taxon>Eurotiales</taxon>
        <taxon>Aspergillaceae</taxon>
        <taxon>Penicillium</taxon>
    </lineage>
</organism>
<evidence type="ECO:0000250" key="1">
    <source>
        <dbReference type="UniProtKB" id="O00085"/>
    </source>
</evidence>
<evidence type="ECO:0000250" key="2">
    <source>
        <dbReference type="UniProtKB" id="P34752"/>
    </source>
</evidence>
<evidence type="ECO:0000255" key="3">
    <source>
        <dbReference type="PROSITE-ProRule" id="PRU00498"/>
    </source>
</evidence>
<evidence type="ECO:0000269" key="4">
    <source>
    </source>
</evidence>
<evidence type="ECO:0000269" key="5">
    <source ref="1"/>
</evidence>
<evidence type="ECO:0000303" key="6">
    <source ref="1"/>
</evidence>
<evidence type="ECO:0000305" key="7"/>
<reference key="1">
    <citation type="journal article" date="2007" name="World J. Microbiol. Biotechnol.">
        <title>Recombinant production of Penicillium oxalicum PJ3 phytase in Pichia Pastoris.</title>
        <authorList>
            <person name="Lee J."/>
            <person name="Choi Y."/>
            <person name="Lee P.-C."/>
            <person name="Kang S."/>
            <person name="Bok J."/>
            <person name="Cho J."/>
        </authorList>
        <dbReference type="AGRICOLA" id="IND43879907"/>
    </citation>
    <scope>NUCLEOTIDE SEQUENCE [GENOMIC DNA]</scope>
    <scope>FUNCTION</scope>
    <scope>CATALYTIC ACTIVITY</scope>
    <scope>BIOPHYSICOCHEMICAL PROPERTIES</scope>
    <scope>GLYCOSYLATION</scope>
</reference>
<reference key="2">
    <citation type="journal article" date="2015" name="Prep. Biochem. Biotechnol.">
        <title>Characterization, gene cloning, and sequencing of a fungal phytase, PhyA, from Penicillium oxalicum PJ3.</title>
        <authorList>
            <person name="Lee S.H."/>
            <person name="Cho J."/>
            <person name="Bok J."/>
            <person name="Kang S."/>
            <person name="Choi Y."/>
            <person name="Lee P.C."/>
        </authorList>
    </citation>
    <scope>NUCLEOTIDE SEQUENCE [GENOMIC DNA]</scope>
    <scope>FUNCTION</scope>
    <scope>CATALYTIC ACTIVITY</scope>
    <scope>BIOTECHNOLOGY</scope>
</reference>
<feature type="chain" id="PRO_0000459181" description="Phytase A">
    <location>
        <begin position="1"/>
        <end position="461"/>
    </location>
</feature>
<feature type="active site" description="Nucleophile" evidence="2">
    <location>
        <position position="72"/>
    </location>
</feature>
<feature type="binding site" evidence="2">
    <location>
        <position position="41"/>
    </location>
    <ligand>
        <name>1D-myo-inositol hexakisphosphate</name>
        <dbReference type="ChEBI" id="CHEBI:58130"/>
    </ligand>
</feature>
<feature type="binding site" evidence="2">
    <location>
        <position position="42"/>
    </location>
    <ligand>
        <name>1D-myo-inositol hexakisphosphate</name>
        <dbReference type="ChEBI" id="CHEBI:58130"/>
    </ligand>
</feature>
<feature type="binding site" evidence="2">
    <location>
        <position position="71"/>
    </location>
    <ligand>
        <name>1D-myo-inositol hexakisphosphate</name>
        <dbReference type="ChEBI" id="CHEBI:58130"/>
    </ligand>
</feature>
<feature type="binding site" evidence="2">
    <location>
        <position position="72"/>
    </location>
    <ligand>
        <name>1D-myo-inositol hexakisphosphate</name>
        <dbReference type="ChEBI" id="CHEBI:58130"/>
    </ligand>
</feature>
<feature type="binding site" evidence="2">
    <location>
        <position position="75"/>
    </location>
    <ligand>
        <name>1D-myo-inositol hexakisphosphate</name>
        <dbReference type="ChEBI" id="CHEBI:58130"/>
    </ligand>
</feature>
<feature type="binding site" evidence="2">
    <location>
        <position position="78"/>
    </location>
    <ligand>
        <name>1D-myo-inositol hexakisphosphate</name>
        <dbReference type="ChEBI" id="CHEBI:58130"/>
    </ligand>
</feature>
<feature type="binding site" evidence="2">
    <location>
        <position position="155"/>
    </location>
    <ligand>
        <name>1D-myo-inositol hexakisphosphate</name>
        <dbReference type="ChEBI" id="CHEBI:58130"/>
    </ligand>
</feature>
<feature type="binding site" evidence="2">
    <location>
        <position position="291"/>
    </location>
    <ligand>
        <name>1D-myo-inositol hexakisphosphate</name>
        <dbReference type="ChEBI" id="CHEBI:58130"/>
    </ligand>
</feature>
<feature type="binding site" evidence="2">
    <location>
        <position position="352"/>
    </location>
    <ligand>
        <name>1D-myo-inositol hexakisphosphate</name>
        <dbReference type="ChEBI" id="CHEBI:58130"/>
    </ligand>
</feature>
<feature type="binding site" evidence="2">
    <location>
        <position position="353"/>
    </location>
    <ligand>
        <name>1D-myo-inositol hexakisphosphate</name>
        <dbReference type="ChEBI" id="CHEBI:58130"/>
    </ligand>
</feature>
<feature type="glycosylation site" description="N-linked (GlcNAc...) asparagine" evidence="3">
    <location>
        <position position="95"/>
    </location>
</feature>
<feature type="glycosylation site" description="N-linked (GlcNAc...) asparagine" evidence="3">
    <location>
        <position position="110"/>
    </location>
</feature>
<feature type="glycosylation site" description="N-linked (GlcNAc...) asparagine" evidence="3">
    <location>
        <position position="197"/>
    </location>
</feature>
<feature type="glycosylation site" description="N-linked (GlcNAc...) asparagine" evidence="3">
    <location>
        <position position="329"/>
    </location>
</feature>
<feature type="glycosylation site" description="N-linked (GlcNAc...) asparagine" evidence="3">
    <location>
        <position position="343"/>
    </location>
</feature>
<feature type="glycosylation site" description="N-linked (GlcNAc...) asparagine" evidence="3">
    <location>
        <position position="367"/>
    </location>
</feature>
<feature type="disulfide bond" evidence="2">
    <location>
        <begin position="22"/>
        <end position="31"/>
    </location>
</feature>
<feature type="disulfide bond" evidence="2">
    <location>
        <begin position="61"/>
        <end position="405"/>
    </location>
</feature>
<feature type="disulfide bond" evidence="2">
    <location>
        <begin position="205"/>
        <end position="456"/>
    </location>
</feature>
<feature type="disulfide bond" evidence="2">
    <location>
        <begin position="254"/>
        <end position="272"/>
    </location>
</feature>
<feature type="disulfide bond" evidence="2">
    <location>
        <begin position="427"/>
        <end position="435"/>
    </location>
</feature>
<comment type="function">
    <text evidence="2 4 5">Catalyzes the phosphate monoester hydrolysis of phytic acid (myo-inositol hexakisphosphate), which results in the stepwise formation of myo-inositol pentakis-, tetrakis-, tris-, bis-, and monophosphates, as well as the liberation of inorganic phosphate (PubMed:24839991, Ref.1). Myo-inositol 2-monophosphate is the end product (By similarity).</text>
</comment>
<comment type="catalytic activity">
    <reaction evidence="4 5">
        <text>1D-myo-inositol hexakisphosphate + H2O = 1D-myo-inositol 1,2,4,5,6-pentakisphosphate + phosphate</text>
        <dbReference type="Rhea" id="RHEA:16989"/>
        <dbReference type="ChEBI" id="CHEBI:15377"/>
        <dbReference type="ChEBI" id="CHEBI:43474"/>
        <dbReference type="ChEBI" id="CHEBI:57798"/>
        <dbReference type="ChEBI" id="CHEBI:58130"/>
        <dbReference type="EC" id="3.1.3.8"/>
    </reaction>
    <physiologicalReaction direction="left-to-right" evidence="4 5">
        <dbReference type="Rhea" id="RHEA:16990"/>
    </physiologicalReaction>
</comment>
<comment type="catalytic activity">
    <reaction evidence="2">
        <text>1D-myo-inositol 1,2,4,5,6-pentakisphosphate + H2O = 1D-myo-inositol 1,2,5,6-tetrakisphosphate + phosphate</text>
        <dbReference type="Rhea" id="RHEA:77115"/>
        <dbReference type="ChEBI" id="CHEBI:15377"/>
        <dbReference type="ChEBI" id="CHEBI:43474"/>
        <dbReference type="ChEBI" id="CHEBI:57798"/>
        <dbReference type="ChEBI" id="CHEBI:195535"/>
    </reaction>
    <physiologicalReaction direction="left-to-right" evidence="2">
        <dbReference type="Rhea" id="RHEA:77116"/>
    </physiologicalReaction>
</comment>
<comment type="catalytic activity">
    <reaction evidence="2">
        <text>1D-myo-inositol 1,2,5,6-tetrakisphosphate + H2O = 1D-myo-inositol 1,2,6-trisphosphate + phosphate</text>
        <dbReference type="Rhea" id="RHEA:77119"/>
        <dbReference type="ChEBI" id="CHEBI:15377"/>
        <dbReference type="ChEBI" id="CHEBI:43474"/>
        <dbReference type="ChEBI" id="CHEBI:195535"/>
        <dbReference type="ChEBI" id="CHEBI:195537"/>
    </reaction>
    <physiologicalReaction direction="left-to-right" evidence="2">
        <dbReference type="Rhea" id="RHEA:77120"/>
    </physiologicalReaction>
</comment>
<comment type="catalytic activity">
    <reaction evidence="2">
        <text>1D-myo-inositol 1,2,6-trisphosphate + H2O = 1D-myo-inositol 1,2-bisphosphate + phosphate</text>
        <dbReference type="Rhea" id="RHEA:77131"/>
        <dbReference type="ChEBI" id="CHEBI:15377"/>
        <dbReference type="ChEBI" id="CHEBI:43474"/>
        <dbReference type="ChEBI" id="CHEBI:195537"/>
        <dbReference type="ChEBI" id="CHEBI:195539"/>
    </reaction>
    <physiologicalReaction direction="left-to-right" evidence="2">
        <dbReference type="Rhea" id="RHEA:77132"/>
    </physiologicalReaction>
</comment>
<comment type="catalytic activity">
    <reaction evidence="2">
        <text>1D-myo-inositol 1,2-bisphosphate + H2O = 1D-myo-inositol 2-phosphate + phosphate</text>
        <dbReference type="Rhea" id="RHEA:77135"/>
        <dbReference type="ChEBI" id="CHEBI:15377"/>
        <dbReference type="ChEBI" id="CHEBI:43474"/>
        <dbReference type="ChEBI" id="CHEBI:84142"/>
        <dbReference type="ChEBI" id="CHEBI:195539"/>
    </reaction>
    <physiologicalReaction direction="left-to-right" evidence="2">
        <dbReference type="Rhea" id="RHEA:77136"/>
    </physiologicalReaction>
</comment>
<comment type="biophysicochemical properties">
    <kinetics>
        <KM evidence="5">0.37 mM for phytate</KM>
    </kinetics>
    <phDependence>
        <text evidence="5">Optimum pH is 4.5.</text>
    </phDependence>
    <temperatureDependence>
        <text evidence="5">Optimum temperature is 55 degrees Celsius.</text>
    </temperatureDependence>
</comment>
<comment type="subunit">
    <text evidence="1">Monomer.</text>
</comment>
<comment type="subcellular location">
    <subcellularLocation>
        <location evidence="7">Secreted</location>
    </subcellularLocation>
</comment>
<comment type="PTM">
    <text evidence="5">Glycosylated.</text>
</comment>
<comment type="biotechnology">
    <text evidence="4 5">Phytic acid is the major storage form of phosphorus in plant seeds and, thus, in seed-based animal feed. Phytases are therefore of considerable economic interest.</text>
</comment>
<comment type="similarity">
    <text evidence="7">Belongs to the histidine acid phosphatase family.</text>
</comment>